<gene>
    <name type="primary">hpaP</name>
    <name type="ordered locus">RSp0862</name>
    <name type="ORF">RS01633</name>
</gene>
<proteinExistence type="predicted"/>
<evidence type="ECO:0000256" key="1">
    <source>
        <dbReference type="SAM" id="MobiDB-lite"/>
    </source>
</evidence>
<accession>P35651</accession>
<protein>
    <recommendedName>
        <fullName>HRP-associated protein</fullName>
    </recommendedName>
</protein>
<name>HPAP_RALN1</name>
<geneLocation type="plasmid">
    <name>megaplasmid Rsp</name>
</geneLocation>
<dbReference type="EMBL" id="AJ245811">
    <property type="protein sequence ID" value="CAB58249.1"/>
    <property type="molecule type" value="Genomic_DNA"/>
</dbReference>
<dbReference type="EMBL" id="AL646053">
    <property type="protein sequence ID" value="CAD18013.1"/>
    <property type="molecule type" value="Genomic_DNA"/>
</dbReference>
<dbReference type="PIR" id="S35252">
    <property type="entry name" value="S35252"/>
</dbReference>
<dbReference type="RefSeq" id="WP_011004159.1">
    <property type="nucleotide sequence ID" value="NC_003296.1"/>
</dbReference>
<dbReference type="STRING" id="267608.RSp0862"/>
<dbReference type="EnsemblBacteria" id="CAD18013">
    <property type="protein sequence ID" value="CAD18013"/>
    <property type="gene ID" value="RSp0862"/>
</dbReference>
<dbReference type="KEGG" id="rso:RSp0862"/>
<dbReference type="PATRIC" id="fig|267608.8.peg.4332"/>
<dbReference type="eggNOG" id="ENOG5033AF7">
    <property type="taxonomic scope" value="Bacteria"/>
</dbReference>
<dbReference type="HOGENOM" id="CLU_1383154_0_0_4"/>
<dbReference type="PHI-base" id="PHI:4106"/>
<dbReference type="Proteomes" id="UP000001436">
    <property type="component" value="Plasmid megaplasmid Rsp"/>
</dbReference>
<dbReference type="InterPro" id="IPR013390">
    <property type="entry name" value="T3SS_HpaP"/>
</dbReference>
<dbReference type="NCBIfam" id="TIGR02557">
    <property type="entry name" value="HpaP"/>
    <property type="match status" value="1"/>
</dbReference>
<dbReference type="Pfam" id="PF09483">
    <property type="entry name" value="HpaP"/>
    <property type="match status" value="1"/>
</dbReference>
<keyword id="KW-0614">Plasmid</keyword>
<keyword id="KW-1185">Reference proteome</keyword>
<feature type="chain" id="PRO_0000084034" description="HRP-associated protein">
    <location>
        <begin position="1"/>
        <end position="197"/>
    </location>
</feature>
<feature type="region of interest" description="Disordered" evidence="1">
    <location>
        <begin position="1"/>
        <end position="82"/>
    </location>
</feature>
<sequence>MTQAVRLWRPQPVDPAPPTRRRTPLRTPGPHDALPYVPPPRPEPPEPVEDDFPEPRQDTPASDPPPEARTDASPPQPAADPDASLHTAAIASRLVRTCSEIGAGETMTEHLARLLSQFCASQAIRSGGECWEISLDLDPKILPETRLTLRLSPHTLSLRFEAGHPRSRHLLSEHGDTLRQRIHALLRQQVDVELELW</sequence>
<organism>
    <name type="scientific">Ralstonia nicotianae (strain ATCC BAA-1114 / GMI1000)</name>
    <name type="common">Ralstonia solanacearum</name>
    <dbReference type="NCBI Taxonomy" id="267608"/>
    <lineage>
        <taxon>Bacteria</taxon>
        <taxon>Pseudomonadati</taxon>
        <taxon>Pseudomonadota</taxon>
        <taxon>Betaproteobacteria</taxon>
        <taxon>Burkholderiales</taxon>
        <taxon>Burkholderiaceae</taxon>
        <taxon>Ralstonia</taxon>
        <taxon>Ralstonia solanacearum species complex</taxon>
    </lineage>
</organism>
<reference key="1">
    <citation type="journal article" date="1993" name="Mol. Gen. Genet.">
        <title>Homology between the HrpO protein of Pseudomonas solanacearum and bacterial proteins implicated in a signal peptide-independent secretion mechanism.</title>
        <authorList>
            <person name="Gough C.L."/>
            <person name="Genin S."/>
            <person name="Lopes V."/>
            <person name="Boucher C.A."/>
        </authorList>
    </citation>
    <scope>NUCLEOTIDE SEQUENCE [GENOMIC DNA]</scope>
    <source>
        <strain>ATCC BAA-1114 / GMI1000</strain>
    </source>
</reference>
<reference key="2">
    <citation type="journal article" date="2002" name="Nature">
        <title>Genome sequence of the plant pathogen Ralstonia solanacearum.</title>
        <authorList>
            <person name="Salanoubat M."/>
            <person name="Genin S."/>
            <person name="Artiguenave F."/>
            <person name="Gouzy J."/>
            <person name="Mangenot S."/>
            <person name="Arlat M."/>
            <person name="Billault A."/>
            <person name="Brottier P."/>
            <person name="Camus J.-C."/>
            <person name="Cattolico L."/>
            <person name="Chandler M."/>
            <person name="Choisne N."/>
            <person name="Claudel-Renard C."/>
            <person name="Cunnac S."/>
            <person name="Demange N."/>
            <person name="Gaspin C."/>
            <person name="Lavie M."/>
            <person name="Moisan A."/>
            <person name="Robert C."/>
            <person name="Saurin W."/>
            <person name="Schiex T."/>
            <person name="Siguier P."/>
            <person name="Thebault P."/>
            <person name="Whalen M."/>
            <person name="Wincker P."/>
            <person name="Levy M."/>
            <person name="Weissenbach J."/>
            <person name="Boucher C.A."/>
        </authorList>
    </citation>
    <scope>NUCLEOTIDE SEQUENCE [LARGE SCALE GENOMIC DNA]</scope>
    <source>
        <strain>ATCC BAA-1114 / GMI1000</strain>
    </source>
</reference>